<name>NFYA_MOUSE</name>
<organism>
    <name type="scientific">Mus musculus</name>
    <name type="common">Mouse</name>
    <dbReference type="NCBI Taxonomy" id="10090"/>
    <lineage>
        <taxon>Eukaryota</taxon>
        <taxon>Metazoa</taxon>
        <taxon>Chordata</taxon>
        <taxon>Craniata</taxon>
        <taxon>Vertebrata</taxon>
        <taxon>Euteleostomi</taxon>
        <taxon>Mammalia</taxon>
        <taxon>Eutheria</taxon>
        <taxon>Euarchontoglires</taxon>
        <taxon>Glires</taxon>
        <taxon>Rodentia</taxon>
        <taxon>Myomorpha</taxon>
        <taxon>Muroidea</taxon>
        <taxon>Muridae</taxon>
        <taxon>Murinae</taxon>
        <taxon>Mus</taxon>
        <taxon>Mus</taxon>
    </lineage>
</organism>
<comment type="function">
    <text evidence="4">Component of the sequence-specific heterotrimeric transcription factor (NF-Y) which specifically recognizes a 5'-CCAAT-3' box motif found in the promoters of its target genes. NF-Y can function as both an activator and a repressor, depending on its interacting cofactors. NF-YA positively regulates the transcription of the core clock component BMAL1.</text>
</comment>
<comment type="subunit">
    <text evidence="1">Heterotrimeric transcription factor composed of three components, NF-YA, NF-YB and NF-YC. NF-YB and NF-YC must interact and dimerize for NF-YA association and DNA binding (By similarity). Interacts with SP1; the interaction is inhibited by glycosylation of SP1. Interacts (via N-terminus) with ZHX2 (via homeobox domain). Interacts with ZFX3. Interacts with ZHX1 (By similarity).</text>
</comment>
<comment type="interaction">
    <interactant intactId="EBI-862337">
        <id>P23708</id>
    </interactant>
    <interactant intactId="EBI-298336">
        <id>P08047</id>
        <label>SP1</label>
    </interactant>
    <organismsDiffer>true</organismsDiffer>
    <experiments>18</experiments>
</comment>
<comment type="subcellular location">
    <subcellularLocation>
        <location>Nucleus</location>
    </subcellularLocation>
</comment>
<comment type="alternative products">
    <event type="alternative splicing"/>
    <isoform>
        <id>P23708-1</id>
        <name>Long</name>
        <sequence type="displayed"/>
    </isoform>
    <isoform>
        <id>P23708-2</id>
        <name>Short</name>
        <sequence type="described" ref="VSP_000850"/>
    </isoform>
</comment>
<comment type="similarity">
    <text evidence="2">Belongs to the NFYA/HAP2 subunit family.</text>
</comment>
<accession>P23708</accession>
<evidence type="ECO:0000250" key="1"/>
<evidence type="ECO:0000255" key="2">
    <source>
        <dbReference type="PROSITE-ProRule" id="PRU00966"/>
    </source>
</evidence>
<evidence type="ECO:0000256" key="3">
    <source>
        <dbReference type="SAM" id="MobiDB-lite"/>
    </source>
</evidence>
<evidence type="ECO:0000269" key="4">
    <source>
    </source>
</evidence>
<evidence type="ECO:0000305" key="5"/>
<evidence type="ECO:0007744" key="6">
    <source>
    </source>
</evidence>
<proteinExistence type="evidence at protein level"/>
<protein>
    <recommendedName>
        <fullName>Nuclear transcription factor Y subunit alpha</fullName>
    </recommendedName>
    <alternativeName>
        <fullName>CAAT box DNA-binding protein subunit A</fullName>
    </alternativeName>
    <alternativeName>
        <fullName>Nuclear transcription factor Y subunit A</fullName>
        <shortName>NF-YA</shortName>
    </alternativeName>
</protein>
<reference key="1">
    <citation type="journal article" date="1992" name="Nucleic Acids Res.">
        <title>Evolutionary variation of the CCAAT-binding transcription factor NF-Y.</title>
        <authorList>
            <person name="Li X.-Y."/>
            <person name="Mantovani R."/>
            <person name="Hooft van Huijsduijnen R."/>
            <person name="Andre I."/>
            <person name="Benoist C."/>
            <person name="Mathis D."/>
        </authorList>
    </citation>
    <scope>NUCLEOTIDE SEQUENCE [MRNA]</scope>
</reference>
<reference key="2">
    <citation type="journal article" date="1992" name="J. Biol. Chem.">
        <title>Intron-exon organization of the NF-Y genes. Tissue-specific splicing modifies an activation domain.</title>
        <authorList>
            <person name="Li X.-Y."/>
            <person name="Hooft van Huijsduijnen R."/>
            <person name="Mantovani R."/>
            <person name="Benoist C.O."/>
            <person name="Mathis D."/>
        </authorList>
    </citation>
    <scope>NUCLEOTIDE SEQUENCE [MRNA]</scope>
</reference>
<reference key="3">
    <citation type="journal article" date="1990" name="EMBO J.">
        <title>Co-evolution from yeast to mouse: cDNA cloning of the two NF-Y (CP-1/CBF) subunits.</title>
        <authorList>
            <person name="Hooft van Huijsduijnen R."/>
            <person name="Li X.-Y."/>
            <person name="Black D."/>
            <person name="Matthes H."/>
            <person name="Benoist C."/>
            <person name="Mathis D."/>
        </authorList>
    </citation>
    <scope>NUCLEOTIDE SEQUENCE [MRNA] OF 1-25 AND 54-346</scope>
    <scope>PARTIAL PROTEIN SEQUENCE</scope>
</reference>
<reference key="4">
    <citation type="journal article" date="2010" name="Cell">
        <title>A tissue-specific atlas of mouse protein phosphorylation and expression.</title>
        <authorList>
            <person name="Huttlin E.L."/>
            <person name="Jedrychowski M.P."/>
            <person name="Elias J.E."/>
            <person name="Goswami T."/>
            <person name="Rad R."/>
            <person name="Beausoleil S.A."/>
            <person name="Villen J."/>
            <person name="Haas W."/>
            <person name="Sowa M.E."/>
            <person name="Gygi S.P."/>
        </authorList>
    </citation>
    <scope>PHOSPHORYLATION [LARGE SCALE ANALYSIS] AT SER-325</scope>
    <scope>IDENTIFICATION BY MASS SPECTROMETRY [LARGE SCALE ANALYSIS]</scope>
    <source>
        <tissue>Liver</tissue>
        <tissue>Lung</tissue>
        <tissue>Pancreas</tissue>
        <tissue>Spleen</tissue>
    </source>
</reference>
<reference key="5">
    <citation type="journal article" date="2013" name="J. Biol. Chem.">
        <title>Transcription factor NF-Y is a functional regulator of the transcription of core clock gene Bmal1.</title>
        <authorList>
            <person name="Xiao J."/>
            <person name="Zhou Y."/>
            <person name="Lai H."/>
            <person name="Lei S."/>
            <person name="Chi L.H."/>
            <person name="Mo X."/>
        </authorList>
    </citation>
    <scope>FUNCTION</scope>
</reference>
<feature type="chain" id="PRO_0000198769" description="Nuclear transcription factor Y subunit alpha">
    <location>
        <begin position="1"/>
        <end position="346"/>
    </location>
</feature>
<feature type="DNA-binding region" description="NFYA/HAP2-type" evidence="2">
    <location>
        <begin position="295"/>
        <end position="320"/>
    </location>
</feature>
<feature type="region of interest" description="Disordered" evidence="3">
    <location>
        <begin position="298"/>
        <end position="346"/>
    </location>
</feature>
<feature type="short sequence motif" description="Subunit association domain (SAD)">
    <location>
        <begin position="265"/>
        <end position="288"/>
    </location>
</feature>
<feature type="compositionally biased region" description="Basic residues" evidence="3">
    <location>
        <begin position="298"/>
        <end position="309"/>
    </location>
</feature>
<feature type="compositionally biased region" description="Basic and acidic residues" evidence="3">
    <location>
        <begin position="310"/>
        <end position="327"/>
    </location>
</feature>
<feature type="modified residue" description="Phosphoserine" evidence="6">
    <location>
        <position position="325"/>
    </location>
</feature>
<feature type="splice variant" id="VSP_000850" description="In isoform Short." evidence="5">
    <location>
        <begin position="26"/>
        <end position="53"/>
    </location>
</feature>
<feature type="sequence conflict" description="In Ref. 2; AAA39816." evidence="5" ref="2">
    <location>
        <begin position="182"/>
        <end position="187"/>
    </location>
</feature>
<sequence>MEQYTTNSNSSTEQIVVQAGQIQQQQGGVTAVQLQTEAQVASASGQQVQTLQVVQGQPLMVQVSGGQLITSTGQPIMVQAVPGGQGQTIMQVPVSGTQGLQQIQLVPPGQIQIQGGQAVQVQGQQGQTQQIIIQQPQTAVTAGQTQTQQQIAVQGQQVAQTAEGQTIVYQPVNADGTILQQVTVPVSGMITIPAASLAGAQIVQTGANTNTTSSGQGTVTVTLPVAGNVVNSGGMVMMVPGAGSVPAIQRIPLPGAEMLEEEPLYVNAKQYHRILKRRQARAKLEAEGKIPKERRKYLHESRHRHAMARKRGEGGRFFSPKEKDSPHMQDPNQADEEAMTQIIRVS</sequence>
<dbReference type="EMBL" id="X55315">
    <property type="protein sequence ID" value="CAA39023.1"/>
    <property type="molecule type" value="mRNA"/>
</dbReference>
<dbReference type="EMBL" id="M86215">
    <property type="protein sequence ID" value="AAA39817.1"/>
    <property type="molecule type" value="mRNA"/>
</dbReference>
<dbReference type="EMBL" id="M86214">
    <property type="protein sequence ID" value="AAA39816.1"/>
    <property type="molecule type" value="mRNA"/>
</dbReference>
<dbReference type="CCDS" id="CCDS28867.1">
    <molecule id="P23708-2"/>
</dbReference>
<dbReference type="CCDS" id="CCDS84321.1">
    <molecule id="P23708-1"/>
</dbReference>
<dbReference type="PIR" id="A38245">
    <property type="entry name" value="A38245"/>
</dbReference>
<dbReference type="PIR" id="C38245">
    <property type="entry name" value="C38245"/>
</dbReference>
<dbReference type="PIR" id="D38245">
    <property type="entry name" value="D38245"/>
</dbReference>
<dbReference type="PIR" id="E38245">
    <property type="entry name" value="E38245"/>
</dbReference>
<dbReference type="RefSeq" id="NP_001334330.1">
    <molecule id="P23708-1"/>
    <property type="nucleotide sequence ID" value="NM_001347401.2"/>
</dbReference>
<dbReference type="RefSeq" id="NP_001334331.1">
    <property type="nucleotide sequence ID" value="NM_001347402.1"/>
</dbReference>
<dbReference type="RefSeq" id="NP_035043.1">
    <molecule id="P23708-2"/>
    <property type="nucleotide sequence ID" value="NM_010913.3"/>
</dbReference>
<dbReference type="SMR" id="P23708"/>
<dbReference type="BioGRID" id="201760">
    <property type="interactions" value="17"/>
</dbReference>
<dbReference type="ComplexPortal" id="CPX-89">
    <property type="entry name" value="CCAAT-binding factor complex"/>
</dbReference>
<dbReference type="CORUM" id="P23708"/>
<dbReference type="DIP" id="DIP-2661N"/>
<dbReference type="FunCoup" id="P23708">
    <property type="interactions" value="3761"/>
</dbReference>
<dbReference type="IntAct" id="P23708">
    <property type="interactions" value="15"/>
</dbReference>
<dbReference type="MINT" id="P23708"/>
<dbReference type="STRING" id="10090.ENSMUSP00000043909"/>
<dbReference type="GlyGen" id="P23708">
    <property type="glycosylation" value="1 site"/>
</dbReference>
<dbReference type="iPTMnet" id="P23708"/>
<dbReference type="PhosphoSitePlus" id="P23708"/>
<dbReference type="jPOST" id="P23708"/>
<dbReference type="PaxDb" id="10090-ENSMUSP00000043909"/>
<dbReference type="ProteomicsDB" id="252830">
    <molecule id="P23708-1"/>
</dbReference>
<dbReference type="ProteomicsDB" id="252831">
    <molecule id="P23708-2"/>
</dbReference>
<dbReference type="Pumba" id="P23708"/>
<dbReference type="Antibodypedia" id="3982">
    <property type="antibodies" value="226 antibodies from 35 providers"/>
</dbReference>
<dbReference type="DNASU" id="18044"/>
<dbReference type="Ensembl" id="ENSMUST00000078800.13">
    <molecule id="P23708-1"/>
    <property type="protein sequence ID" value="ENSMUSP00000077853.7"/>
    <property type="gene ID" value="ENSMUSG00000023994.14"/>
</dbReference>
<dbReference type="Ensembl" id="ENSMUST00000162460.8">
    <molecule id="P23708-2"/>
    <property type="protein sequence ID" value="ENSMUSP00000123785.2"/>
    <property type="gene ID" value="ENSMUSG00000023994.14"/>
</dbReference>
<dbReference type="GeneID" id="18044"/>
<dbReference type="KEGG" id="mmu:18044"/>
<dbReference type="UCSC" id="uc008cxp.2">
    <molecule id="P23708-1"/>
    <property type="organism name" value="mouse"/>
</dbReference>
<dbReference type="AGR" id="MGI:97316"/>
<dbReference type="CTD" id="4800"/>
<dbReference type="MGI" id="MGI:97316">
    <property type="gene designation" value="Nfya"/>
</dbReference>
<dbReference type="VEuPathDB" id="HostDB:ENSMUSG00000023994"/>
<dbReference type="eggNOG" id="KOG1561">
    <property type="taxonomic scope" value="Eukaryota"/>
</dbReference>
<dbReference type="GeneTree" id="ENSGT00390000015714"/>
<dbReference type="InParanoid" id="P23708"/>
<dbReference type="OMA" id="VAHMIRV"/>
<dbReference type="OrthoDB" id="1097733at2759"/>
<dbReference type="PhylomeDB" id="P23708"/>
<dbReference type="BioGRID-ORCS" id="18044">
    <property type="hits" value="8 hits in 80 CRISPR screens"/>
</dbReference>
<dbReference type="ChiTaRS" id="Nfya">
    <property type="organism name" value="mouse"/>
</dbReference>
<dbReference type="PRO" id="PR:P23708"/>
<dbReference type="Proteomes" id="UP000000589">
    <property type="component" value="Chromosome 17"/>
</dbReference>
<dbReference type="RNAct" id="P23708">
    <property type="molecule type" value="protein"/>
</dbReference>
<dbReference type="Bgee" id="ENSMUSG00000023994">
    <property type="expression patterns" value="Expressed in secondary oocyte and 85 other cell types or tissues"/>
</dbReference>
<dbReference type="ExpressionAtlas" id="P23708">
    <property type="expression patterns" value="baseline and differential"/>
</dbReference>
<dbReference type="GO" id="GO:0016602">
    <property type="term" value="C:CCAAT-binding factor complex"/>
    <property type="evidence" value="ECO:0000266"/>
    <property type="project" value="ComplexPortal"/>
</dbReference>
<dbReference type="GO" id="GO:0005654">
    <property type="term" value="C:nucleoplasm"/>
    <property type="evidence" value="ECO:0000304"/>
    <property type="project" value="Reactome"/>
</dbReference>
<dbReference type="GO" id="GO:0005634">
    <property type="term" value="C:nucleus"/>
    <property type="evidence" value="ECO:0000314"/>
    <property type="project" value="MGI"/>
</dbReference>
<dbReference type="GO" id="GO:0003677">
    <property type="term" value="F:DNA binding"/>
    <property type="evidence" value="ECO:0000314"/>
    <property type="project" value="MGI"/>
</dbReference>
<dbReference type="GO" id="GO:0001228">
    <property type="term" value="F:DNA-binding transcription activator activity, RNA polymerase II-specific"/>
    <property type="evidence" value="ECO:0000314"/>
    <property type="project" value="NTNU_SB"/>
</dbReference>
<dbReference type="GO" id="GO:0003700">
    <property type="term" value="F:DNA-binding transcription factor activity"/>
    <property type="evidence" value="ECO:0000314"/>
    <property type="project" value="MGI"/>
</dbReference>
<dbReference type="GO" id="GO:0000978">
    <property type="term" value="F:RNA polymerase II cis-regulatory region sequence-specific DNA binding"/>
    <property type="evidence" value="ECO:0000314"/>
    <property type="project" value="UniProtKB"/>
</dbReference>
<dbReference type="GO" id="GO:0043565">
    <property type="term" value="F:sequence-specific DNA binding"/>
    <property type="evidence" value="ECO:0000316"/>
    <property type="project" value="MGI"/>
</dbReference>
<dbReference type="GO" id="GO:0045893">
    <property type="term" value="P:positive regulation of DNA-templated transcription"/>
    <property type="evidence" value="ECO:0000314"/>
    <property type="project" value="MGI"/>
</dbReference>
<dbReference type="GO" id="GO:2000648">
    <property type="term" value="P:positive regulation of stem cell proliferation"/>
    <property type="evidence" value="ECO:0000314"/>
    <property type="project" value="MGI"/>
</dbReference>
<dbReference type="GO" id="GO:0045944">
    <property type="term" value="P:positive regulation of transcription by RNA polymerase II"/>
    <property type="evidence" value="ECO:0000314"/>
    <property type="project" value="BHF-UCL"/>
</dbReference>
<dbReference type="GO" id="GO:2000036">
    <property type="term" value="P:regulation of stem cell population maintenance"/>
    <property type="evidence" value="ECO:0000314"/>
    <property type="project" value="MGI"/>
</dbReference>
<dbReference type="GO" id="GO:0048511">
    <property type="term" value="P:rhythmic process"/>
    <property type="evidence" value="ECO:0007669"/>
    <property type="project" value="UniProtKB-KW"/>
</dbReference>
<dbReference type="GO" id="GO:0072089">
    <property type="term" value="P:stem cell proliferation"/>
    <property type="evidence" value="ECO:0000314"/>
    <property type="project" value="MGI"/>
</dbReference>
<dbReference type="Gene3D" id="6.10.250.2430">
    <property type="match status" value="1"/>
</dbReference>
<dbReference type="InterPro" id="IPR018362">
    <property type="entry name" value="CCAAT-binding_factor_CS"/>
</dbReference>
<dbReference type="InterPro" id="IPR001289">
    <property type="entry name" value="NFYA"/>
</dbReference>
<dbReference type="PANTHER" id="PTHR12632">
    <property type="entry name" value="TRANSCRIPTION FACTOR NF-Y ALPHA-RELATED"/>
    <property type="match status" value="1"/>
</dbReference>
<dbReference type="Pfam" id="PF02045">
    <property type="entry name" value="CBFB_NFYA"/>
    <property type="match status" value="1"/>
</dbReference>
<dbReference type="PRINTS" id="PR00616">
    <property type="entry name" value="CCAATSUBUNTB"/>
</dbReference>
<dbReference type="SMART" id="SM00521">
    <property type="entry name" value="CBF"/>
    <property type="match status" value="1"/>
</dbReference>
<dbReference type="PROSITE" id="PS00686">
    <property type="entry name" value="NFYA_HAP2_1"/>
    <property type="match status" value="1"/>
</dbReference>
<dbReference type="PROSITE" id="PS51152">
    <property type="entry name" value="NFYA_HAP2_2"/>
    <property type="match status" value="1"/>
</dbReference>
<keyword id="KW-0010">Activator</keyword>
<keyword id="KW-0025">Alternative splicing</keyword>
<keyword id="KW-0090">Biological rhythms</keyword>
<keyword id="KW-0903">Direct protein sequencing</keyword>
<keyword id="KW-0238">DNA-binding</keyword>
<keyword id="KW-0539">Nucleus</keyword>
<keyword id="KW-0597">Phosphoprotein</keyword>
<keyword id="KW-1185">Reference proteome</keyword>
<keyword id="KW-0804">Transcription</keyword>
<keyword id="KW-0805">Transcription regulation</keyword>
<gene>
    <name type="primary">Nfya</name>
</gene>